<comment type="function">
    <text evidence="1">Succinyl-CoA synthetase functions in the citric acid cycle (TCA), coupling the hydrolysis of succinyl-CoA to the synthesis of either ATP or GTP and thus represents the only step of substrate-level phosphorylation in the TCA. The beta subunit provides nucleotide specificity of the enzyme and binds the substrate succinate, while the binding sites for coenzyme A and phosphate are found in the alpha subunit.</text>
</comment>
<comment type="catalytic activity">
    <reaction evidence="1">
        <text>succinate + ATP + CoA = succinyl-CoA + ADP + phosphate</text>
        <dbReference type="Rhea" id="RHEA:17661"/>
        <dbReference type="ChEBI" id="CHEBI:30031"/>
        <dbReference type="ChEBI" id="CHEBI:30616"/>
        <dbReference type="ChEBI" id="CHEBI:43474"/>
        <dbReference type="ChEBI" id="CHEBI:57287"/>
        <dbReference type="ChEBI" id="CHEBI:57292"/>
        <dbReference type="ChEBI" id="CHEBI:456216"/>
        <dbReference type="EC" id="6.2.1.5"/>
    </reaction>
    <physiologicalReaction direction="right-to-left" evidence="1">
        <dbReference type="Rhea" id="RHEA:17663"/>
    </physiologicalReaction>
</comment>
<comment type="catalytic activity">
    <reaction evidence="1">
        <text>GTP + succinate + CoA = succinyl-CoA + GDP + phosphate</text>
        <dbReference type="Rhea" id="RHEA:22120"/>
        <dbReference type="ChEBI" id="CHEBI:30031"/>
        <dbReference type="ChEBI" id="CHEBI:37565"/>
        <dbReference type="ChEBI" id="CHEBI:43474"/>
        <dbReference type="ChEBI" id="CHEBI:57287"/>
        <dbReference type="ChEBI" id="CHEBI:57292"/>
        <dbReference type="ChEBI" id="CHEBI:58189"/>
    </reaction>
    <physiologicalReaction direction="right-to-left" evidence="1">
        <dbReference type="Rhea" id="RHEA:22122"/>
    </physiologicalReaction>
</comment>
<comment type="cofactor">
    <cofactor evidence="1">
        <name>Mg(2+)</name>
        <dbReference type="ChEBI" id="CHEBI:18420"/>
    </cofactor>
    <text evidence="1">Binds 1 Mg(2+) ion per subunit.</text>
</comment>
<comment type="pathway">
    <text evidence="1">Carbohydrate metabolism; tricarboxylic acid cycle; succinate from succinyl-CoA (ligase route): step 1/1.</text>
</comment>
<comment type="subunit">
    <text evidence="1">Heterotetramer of two alpha and two beta subunits.</text>
</comment>
<comment type="similarity">
    <text evidence="1">Belongs to the succinate/malate CoA ligase beta subunit family.</text>
</comment>
<protein>
    <recommendedName>
        <fullName evidence="1">Succinate--CoA ligase [ADP-forming] subunit beta</fullName>
        <ecNumber evidence="1">6.2.1.5</ecNumber>
    </recommendedName>
    <alternativeName>
        <fullName evidence="1">Succinyl-CoA synthetase subunit beta</fullName>
        <shortName evidence="1">SCS-beta</shortName>
    </alternativeName>
</protein>
<keyword id="KW-0067">ATP-binding</keyword>
<keyword id="KW-0436">Ligase</keyword>
<keyword id="KW-0460">Magnesium</keyword>
<keyword id="KW-0479">Metal-binding</keyword>
<keyword id="KW-0547">Nucleotide-binding</keyword>
<keyword id="KW-0816">Tricarboxylic acid cycle</keyword>
<sequence length="387" mass="41542">MNLHEYQAKDLLESYGLKVQKGIVAHNPNEAAQAFDQLGGKFAVVKAQVHAGGRGKAGGVKVVKSSQEAREVAESLIGKNLVTFQTDAEGQPVNSVGIFEDVYPVTRELYLGAVVDRSSRKVTFMASTEGGVDIEEVAHNSPEKILKVEVDPLVGLQPFQAREVAFKLGLEGKQINDFVKTMLGAYKAFIECDFALFEINPLAVRENGEIVCVDGKINLDSNALYRHPKLLALRDKSQENAKELKASEHELNYVALEGNIGCMVNGAGLAMATMDIIQLYGGKPANFLDVGGGATKERVIEAFKLILDDENVKAVLINIFGGIVRCDMIAEAIIEAVKEVNVTVPVVVRLEGNNAEKGAKILADSGLKLIPADGLADAADKVVKSLG</sequence>
<proteinExistence type="inferred from homology"/>
<feature type="chain" id="PRO_1000082089" description="Succinate--CoA ligase [ADP-forming] subunit beta">
    <location>
        <begin position="1"/>
        <end position="387"/>
    </location>
</feature>
<feature type="domain" description="ATP-grasp" evidence="1">
    <location>
        <begin position="9"/>
        <end position="245"/>
    </location>
</feature>
<feature type="binding site" evidence="1">
    <location>
        <position position="46"/>
    </location>
    <ligand>
        <name>ATP</name>
        <dbReference type="ChEBI" id="CHEBI:30616"/>
    </ligand>
</feature>
<feature type="binding site" evidence="1">
    <location>
        <begin position="53"/>
        <end position="55"/>
    </location>
    <ligand>
        <name>ATP</name>
        <dbReference type="ChEBI" id="CHEBI:30616"/>
    </ligand>
</feature>
<feature type="binding site" evidence="1">
    <location>
        <position position="100"/>
    </location>
    <ligand>
        <name>ATP</name>
        <dbReference type="ChEBI" id="CHEBI:30616"/>
    </ligand>
</feature>
<feature type="binding site" evidence="1">
    <location>
        <position position="103"/>
    </location>
    <ligand>
        <name>ATP</name>
        <dbReference type="ChEBI" id="CHEBI:30616"/>
    </ligand>
</feature>
<feature type="binding site" evidence="1">
    <location>
        <position position="108"/>
    </location>
    <ligand>
        <name>ATP</name>
        <dbReference type="ChEBI" id="CHEBI:30616"/>
    </ligand>
</feature>
<feature type="binding site" evidence="1">
    <location>
        <position position="200"/>
    </location>
    <ligand>
        <name>Mg(2+)</name>
        <dbReference type="ChEBI" id="CHEBI:18420"/>
    </ligand>
</feature>
<feature type="binding site" evidence="1">
    <location>
        <position position="214"/>
    </location>
    <ligand>
        <name>Mg(2+)</name>
        <dbReference type="ChEBI" id="CHEBI:18420"/>
    </ligand>
</feature>
<feature type="binding site" evidence="1">
    <location>
        <position position="265"/>
    </location>
    <ligand>
        <name>substrate</name>
        <note>ligand shared with subunit alpha</note>
    </ligand>
</feature>
<feature type="binding site" evidence="1">
    <location>
        <begin position="322"/>
        <end position="324"/>
    </location>
    <ligand>
        <name>substrate</name>
        <note>ligand shared with subunit alpha</note>
    </ligand>
</feature>
<reference key="1">
    <citation type="journal article" date="2009" name="PLoS ONE">
        <title>Complete genome sequence of Francisella tularensis subspecies holarctica FTNF002-00.</title>
        <authorList>
            <person name="Barabote R.D."/>
            <person name="Xie G."/>
            <person name="Brettin T.S."/>
            <person name="Hinrichs S.H."/>
            <person name="Fey P.D."/>
            <person name="Jay J.J."/>
            <person name="Engle J.L."/>
            <person name="Godbole S.D."/>
            <person name="Noronha J.M."/>
            <person name="Scheuermann R.H."/>
            <person name="Zhou L.W."/>
            <person name="Lion C."/>
            <person name="Dempsey M.P."/>
        </authorList>
    </citation>
    <scope>NUCLEOTIDE SEQUENCE [LARGE SCALE GENOMIC DNA]</scope>
    <source>
        <strain>FTNF002-00 / FTA</strain>
    </source>
</reference>
<dbReference type="EC" id="6.2.1.5" evidence="1"/>
<dbReference type="EMBL" id="CP000803">
    <property type="protein sequence ID" value="ABU62114.1"/>
    <property type="molecule type" value="Genomic_DNA"/>
</dbReference>
<dbReference type="RefSeq" id="WP_003016913.1">
    <property type="nucleotide sequence ID" value="NC_009749.1"/>
</dbReference>
<dbReference type="SMR" id="A7NDR1"/>
<dbReference type="KEGG" id="fta:FTA_1639"/>
<dbReference type="HOGENOM" id="CLU_037430_0_2_6"/>
<dbReference type="UniPathway" id="UPA00223">
    <property type="reaction ID" value="UER00999"/>
</dbReference>
<dbReference type="GO" id="GO:0005829">
    <property type="term" value="C:cytosol"/>
    <property type="evidence" value="ECO:0007669"/>
    <property type="project" value="TreeGrafter"/>
</dbReference>
<dbReference type="GO" id="GO:0042709">
    <property type="term" value="C:succinate-CoA ligase complex"/>
    <property type="evidence" value="ECO:0007669"/>
    <property type="project" value="TreeGrafter"/>
</dbReference>
<dbReference type="GO" id="GO:0005524">
    <property type="term" value="F:ATP binding"/>
    <property type="evidence" value="ECO:0007669"/>
    <property type="project" value="UniProtKB-UniRule"/>
</dbReference>
<dbReference type="GO" id="GO:0000287">
    <property type="term" value="F:magnesium ion binding"/>
    <property type="evidence" value="ECO:0007669"/>
    <property type="project" value="UniProtKB-UniRule"/>
</dbReference>
<dbReference type="GO" id="GO:0004775">
    <property type="term" value="F:succinate-CoA ligase (ADP-forming) activity"/>
    <property type="evidence" value="ECO:0007669"/>
    <property type="project" value="UniProtKB-UniRule"/>
</dbReference>
<dbReference type="GO" id="GO:0004776">
    <property type="term" value="F:succinate-CoA ligase (GDP-forming) activity"/>
    <property type="evidence" value="ECO:0007669"/>
    <property type="project" value="RHEA"/>
</dbReference>
<dbReference type="GO" id="GO:0006104">
    <property type="term" value="P:succinyl-CoA metabolic process"/>
    <property type="evidence" value="ECO:0007669"/>
    <property type="project" value="TreeGrafter"/>
</dbReference>
<dbReference type="GO" id="GO:0006099">
    <property type="term" value="P:tricarboxylic acid cycle"/>
    <property type="evidence" value="ECO:0007669"/>
    <property type="project" value="UniProtKB-UniRule"/>
</dbReference>
<dbReference type="FunFam" id="3.30.1490.20:FF:000002">
    <property type="entry name" value="Succinate--CoA ligase [ADP-forming] subunit beta"/>
    <property type="match status" value="1"/>
</dbReference>
<dbReference type="FunFam" id="3.30.470.20:FF:000002">
    <property type="entry name" value="Succinate--CoA ligase [ADP-forming] subunit beta"/>
    <property type="match status" value="1"/>
</dbReference>
<dbReference type="FunFam" id="3.40.50.261:FF:000001">
    <property type="entry name" value="Succinate--CoA ligase [ADP-forming] subunit beta"/>
    <property type="match status" value="1"/>
</dbReference>
<dbReference type="Gene3D" id="3.30.1490.20">
    <property type="entry name" value="ATP-grasp fold, A domain"/>
    <property type="match status" value="1"/>
</dbReference>
<dbReference type="Gene3D" id="3.30.470.20">
    <property type="entry name" value="ATP-grasp fold, B domain"/>
    <property type="match status" value="1"/>
</dbReference>
<dbReference type="Gene3D" id="3.40.50.261">
    <property type="entry name" value="Succinyl-CoA synthetase domains"/>
    <property type="match status" value="1"/>
</dbReference>
<dbReference type="HAMAP" id="MF_00558">
    <property type="entry name" value="Succ_CoA_beta"/>
    <property type="match status" value="1"/>
</dbReference>
<dbReference type="InterPro" id="IPR011761">
    <property type="entry name" value="ATP-grasp"/>
</dbReference>
<dbReference type="InterPro" id="IPR013650">
    <property type="entry name" value="ATP-grasp_succ-CoA_synth-type"/>
</dbReference>
<dbReference type="InterPro" id="IPR013815">
    <property type="entry name" value="ATP_grasp_subdomain_1"/>
</dbReference>
<dbReference type="InterPro" id="IPR017866">
    <property type="entry name" value="Succ-CoA_synthase_bsu_CS"/>
</dbReference>
<dbReference type="InterPro" id="IPR005811">
    <property type="entry name" value="SUCC_ACL_C"/>
</dbReference>
<dbReference type="InterPro" id="IPR005809">
    <property type="entry name" value="Succ_CoA_ligase-like_bsu"/>
</dbReference>
<dbReference type="InterPro" id="IPR016102">
    <property type="entry name" value="Succinyl-CoA_synth-like"/>
</dbReference>
<dbReference type="NCBIfam" id="NF001913">
    <property type="entry name" value="PRK00696.1"/>
    <property type="match status" value="1"/>
</dbReference>
<dbReference type="NCBIfam" id="TIGR01016">
    <property type="entry name" value="sucCoAbeta"/>
    <property type="match status" value="1"/>
</dbReference>
<dbReference type="PANTHER" id="PTHR11815:SF10">
    <property type="entry name" value="SUCCINATE--COA LIGASE [GDP-FORMING] SUBUNIT BETA, MITOCHONDRIAL"/>
    <property type="match status" value="1"/>
</dbReference>
<dbReference type="PANTHER" id="PTHR11815">
    <property type="entry name" value="SUCCINYL-COA SYNTHETASE BETA CHAIN"/>
    <property type="match status" value="1"/>
</dbReference>
<dbReference type="Pfam" id="PF08442">
    <property type="entry name" value="ATP-grasp_2"/>
    <property type="match status" value="1"/>
</dbReference>
<dbReference type="Pfam" id="PF00549">
    <property type="entry name" value="Ligase_CoA"/>
    <property type="match status" value="1"/>
</dbReference>
<dbReference type="PIRSF" id="PIRSF001554">
    <property type="entry name" value="SucCS_beta"/>
    <property type="match status" value="1"/>
</dbReference>
<dbReference type="SUPFAM" id="SSF56059">
    <property type="entry name" value="Glutathione synthetase ATP-binding domain-like"/>
    <property type="match status" value="1"/>
</dbReference>
<dbReference type="SUPFAM" id="SSF52210">
    <property type="entry name" value="Succinyl-CoA synthetase domains"/>
    <property type="match status" value="1"/>
</dbReference>
<dbReference type="PROSITE" id="PS50975">
    <property type="entry name" value="ATP_GRASP"/>
    <property type="match status" value="1"/>
</dbReference>
<dbReference type="PROSITE" id="PS01217">
    <property type="entry name" value="SUCCINYL_COA_LIG_3"/>
    <property type="match status" value="1"/>
</dbReference>
<gene>
    <name evidence="1" type="primary">sucC</name>
    <name type="ordered locus">FTA_1639</name>
</gene>
<name>SUCC_FRATF</name>
<organism>
    <name type="scientific">Francisella tularensis subsp. holarctica (strain FTNF002-00 / FTA)</name>
    <dbReference type="NCBI Taxonomy" id="458234"/>
    <lineage>
        <taxon>Bacteria</taxon>
        <taxon>Pseudomonadati</taxon>
        <taxon>Pseudomonadota</taxon>
        <taxon>Gammaproteobacteria</taxon>
        <taxon>Thiotrichales</taxon>
        <taxon>Francisellaceae</taxon>
        <taxon>Francisella</taxon>
    </lineage>
</organism>
<accession>A7NDR1</accession>
<evidence type="ECO:0000255" key="1">
    <source>
        <dbReference type="HAMAP-Rule" id="MF_00558"/>
    </source>
</evidence>